<accession>Q6GBT6</accession>
<protein>
    <recommendedName>
        <fullName evidence="1">Protein/nucleic acid deglycase HchA</fullName>
        <ecNumber evidence="1">3.1.2.-</ecNumber>
        <ecNumber evidence="1">3.5.1.-</ecNumber>
        <ecNumber evidence="1">3.5.1.124</ecNumber>
    </recommendedName>
    <alternativeName>
        <fullName evidence="1">Maillard deglycase</fullName>
    </alternativeName>
</protein>
<feature type="chain" id="PRO_0000209419" description="Protein/nucleic acid deglycase HchA">
    <location>
        <begin position="1"/>
        <end position="292"/>
    </location>
</feature>
<feature type="region of interest" description="Disordered" evidence="2">
    <location>
        <begin position="1"/>
        <end position="23"/>
    </location>
</feature>
<feature type="compositionally biased region" description="Polar residues" evidence="2">
    <location>
        <begin position="1"/>
        <end position="12"/>
    </location>
</feature>
<feature type="active site" description="Nucleophile" evidence="1">
    <location>
        <position position="190"/>
    </location>
</feature>
<organism>
    <name type="scientific">Staphylococcus aureus (strain MSSA476)</name>
    <dbReference type="NCBI Taxonomy" id="282459"/>
    <lineage>
        <taxon>Bacteria</taxon>
        <taxon>Bacillati</taxon>
        <taxon>Bacillota</taxon>
        <taxon>Bacilli</taxon>
        <taxon>Bacillales</taxon>
        <taxon>Staphylococcaceae</taxon>
        <taxon>Staphylococcus</taxon>
    </lineage>
</organism>
<proteinExistence type="inferred from homology"/>
<sequence>MSQDVNELSKQPTPDKAEDNAFFPSPYSLSQYTAPKTDFDGVEHKGAYKDGKWKVLMIAAEERYVLLENGKMFSTGNHPVEMLLPLHHLMEAGFDVDVATLSGYPVKLELWAMPTEDEAVISTYNKLKEKLKQPKKLADVIKNELGPDSDYLSVFIPGGHAAVVGISESEDVQQTLDWALDNDRFIVTLCHGPAALLSAGLNREKSTLEGYSVCVFPDSLDEGANIEIGYLPGRLKWLVADLLTKQGLKVVNDDMTGRTLKDRKLLTGDSPLASNELGKLAVNEMLNAIQNK</sequence>
<dbReference type="EC" id="3.1.2.-" evidence="1"/>
<dbReference type="EC" id="3.5.1.-" evidence="1"/>
<dbReference type="EC" id="3.5.1.124" evidence="1"/>
<dbReference type="EMBL" id="BX571857">
    <property type="protein sequence ID" value="CAG42284.1"/>
    <property type="molecule type" value="Genomic_DNA"/>
</dbReference>
<dbReference type="RefSeq" id="WP_000076405.1">
    <property type="nucleotide sequence ID" value="NC_002953.3"/>
</dbReference>
<dbReference type="SMR" id="Q6GBT6"/>
<dbReference type="MEROPS" id="C56.006"/>
<dbReference type="KEGG" id="sas:SAS0509"/>
<dbReference type="HOGENOM" id="CLU_066933_0_0_9"/>
<dbReference type="GO" id="GO:0005737">
    <property type="term" value="C:cytoplasm"/>
    <property type="evidence" value="ECO:0007669"/>
    <property type="project" value="UniProtKB-SubCell"/>
</dbReference>
<dbReference type="GO" id="GO:0019172">
    <property type="term" value="F:glyoxalase III activity"/>
    <property type="evidence" value="ECO:0007669"/>
    <property type="project" value="TreeGrafter"/>
</dbReference>
<dbReference type="GO" id="GO:0036524">
    <property type="term" value="F:protein deglycase activity"/>
    <property type="evidence" value="ECO:0007669"/>
    <property type="project" value="UniProtKB-UniRule"/>
</dbReference>
<dbReference type="GO" id="GO:0016790">
    <property type="term" value="F:thiolester hydrolase activity"/>
    <property type="evidence" value="ECO:0007669"/>
    <property type="project" value="UniProtKB-UniRule"/>
</dbReference>
<dbReference type="GO" id="GO:0006281">
    <property type="term" value="P:DNA repair"/>
    <property type="evidence" value="ECO:0007669"/>
    <property type="project" value="UniProtKB-UniRule"/>
</dbReference>
<dbReference type="GO" id="GO:0019243">
    <property type="term" value="P:methylglyoxal catabolic process to D-lactate via S-lactoyl-glutathione"/>
    <property type="evidence" value="ECO:0007669"/>
    <property type="project" value="TreeGrafter"/>
</dbReference>
<dbReference type="GO" id="GO:0030091">
    <property type="term" value="P:protein repair"/>
    <property type="evidence" value="ECO:0007669"/>
    <property type="project" value="UniProtKB-UniRule"/>
</dbReference>
<dbReference type="CDD" id="cd03148">
    <property type="entry name" value="GATase1_EcHsp31_like"/>
    <property type="match status" value="1"/>
</dbReference>
<dbReference type="Gene3D" id="3.40.50.880">
    <property type="match status" value="1"/>
</dbReference>
<dbReference type="HAMAP" id="MF_01046">
    <property type="entry name" value="Deglycase_HchA"/>
    <property type="match status" value="1"/>
</dbReference>
<dbReference type="InterPro" id="IPR029062">
    <property type="entry name" value="Class_I_gatase-like"/>
</dbReference>
<dbReference type="InterPro" id="IPR002818">
    <property type="entry name" value="DJ-1/PfpI"/>
</dbReference>
<dbReference type="InterPro" id="IPR017283">
    <property type="entry name" value="HchA"/>
</dbReference>
<dbReference type="InterPro" id="IPR050325">
    <property type="entry name" value="Prot/Nucl_acid_deglycase"/>
</dbReference>
<dbReference type="NCBIfam" id="NF003168">
    <property type="entry name" value="PRK04155.1"/>
    <property type="match status" value="1"/>
</dbReference>
<dbReference type="PANTHER" id="PTHR48094">
    <property type="entry name" value="PROTEIN/NUCLEIC ACID DEGLYCASE DJ-1-RELATED"/>
    <property type="match status" value="1"/>
</dbReference>
<dbReference type="PANTHER" id="PTHR48094:SF20">
    <property type="entry name" value="PROTEIN_NUCLEIC ACID DEGLYCASE 1"/>
    <property type="match status" value="1"/>
</dbReference>
<dbReference type="Pfam" id="PF01965">
    <property type="entry name" value="DJ-1_PfpI"/>
    <property type="match status" value="1"/>
</dbReference>
<dbReference type="PIRSF" id="PIRSF037798">
    <property type="entry name" value="Chaperone_HchA"/>
    <property type="match status" value="1"/>
</dbReference>
<dbReference type="SUPFAM" id="SSF52317">
    <property type="entry name" value="Class I glutamine amidotransferase-like"/>
    <property type="match status" value="1"/>
</dbReference>
<comment type="function">
    <text evidence="1">Protein and nucleotide deglycase that catalyzes the deglycation of the Maillard adducts formed between amino groups of proteins or nucleotides and reactive carbonyl groups of glyoxals. Thus, functions as a protein deglycase that repairs methylglyoxal- and glyoxal-glycated proteins, and releases repaired proteins and lactate or glycolate, respectively. Deglycates cysteine, arginine and lysine residues in proteins, and thus reactivates these proteins by reversing glycation by glyoxals. Acts on early glycation intermediates (hemithioacetals and aminocarbinols), preventing the formation of Schiff bases and advanced glycation endproducts (AGE). Also functions as a nucleotide deglycase able to repair glycated guanine in the free nucleotide pool (GTP, GDP, GMP, dGTP) and in DNA and RNA. Is thus involved in a major nucleotide repair system named guanine glycation repair (GG repair), dedicated to reversing methylglyoxal and glyoxal damage via nucleotide sanitization and direct nucleic acid repair. Plays an important role in protecting cells from carbonyl stress.</text>
</comment>
<comment type="catalytic activity">
    <reaction evidence="1">
        <text>N(omega)-(1-hydroxy-2-oxopropyl)-L-arginyl-[protein] + H2O = lactate + L-arginyl-[protein] + H(+)</text>
        <dbReference type="Rhea" id="RHEA:49548"/>
        <dbReference type="Rhea" id="RHEA-COMP:10532"/>
        <dbReference type="Rhea" id="RHEA-COMP:12428"/>
        <dbReference type="ChEBI" id="CHEBI:15377"/>
        <dbReference type="ChEBI" id="CHEBI:15378"/>
        <dbReference type="ChEBI" id="CHEBI:24996"/>
        <dbReference type="ChEBI" id="CHEBI:29965"/>
        <dbReference type="ChEBI" id="CHEBI:131708"/>
        <dbReference type="EC" id="3.5.1.124"/>
    </reaction>
</comment>
<comment type="catalytic activity">
    <reaction evidence="1">
        <text>N(6)-(1-hydroxy-2-oxopropyl)-L-lysyl-[protein] + H2O = lactate + L-lysyl-[protein] + H(+)</text>
        <dbReference type="Rhea" id="RHEA:49552"/>
        <dbReference type="Rhea" id="RHEA-COMP:9752"/>
        <dbReference type="Rhea" id="RHEA-COMP:12429"/>
        <dbReference type="ChEBI" id="CHEBI:15377"/>
        <dbReference type="ChEBI" id="CHEBI:15378"/>
        <dbReference type="ChEBI" id="CHEBI:24996"/>
        <dbReference type="ChEBI" id="CHEBI:29969"/>
        <dbReference type="ChEBI" id="CHEBI:131709"/>
        <dbReference type="EC" id="3.5.1.124"/>
    </reaction>
</comment>
<comment type="catalytic activity">
    <reaction evidence="1">
        <text>S-(1-hydroxy-2-oxopropyl)-L-cysteinyl-[protein] + H2O = lactate + L-cysteinyl-[protein] + H(+)</text>
        <dbReference type="Rhea" id="RHEA:49556"/>
        <dbReference type="Rhea" id="RHEA-COMP:10131"/>
        <dbReference type="Rhea" id="RHEA-COMP:12430"/>
        <dbReference type="ChEBI" id="CHEBI:15377"/>
        <dbReference type="ChEBI" id="CHEBI:15378"/>
        <dbReference type="ChEBI" id="CHEBI:24996"/>
        <dbReference type="ChEBI" id="CHEBI:29950"/>
        <dbReference type="ChEBI" id="CHEBI:131710"/>
        <dbReference type="EC" id="3.5.1.124"/>
    </reaction>
</comment>
<comment type="catalytic activity">
    <reaction evidence="1">
        <text>N(omega)-(1-hydroxy-2-oxoethyl)-L-arginyl-[protein] + H2O = L-arginyl-[protein] + glycolate + H(+)</text>
        <dbReference type="Rhea" id="RHEA:57188"/>
        <dbReference type="Rhea" id="RHEA-COMP:10532"/>
        <dbReference type="Rhea" id="RHEA-COMP:14844"/>
        <dbReference type="ChEBI" id="CHEBI:15377"/>
        <dbReference type="ChEBI" id="CHEBI:15378"/>
        <dbReference type="ChEBI" id="CHEBI:29805"/>
        <dbReference type="ChEBI" id="CHEBI:29965"/>
        <dbReference type="ChEBI" id="CHEBI:141553"/>
        <dbReference type="EC" id="3.5.1.124"/>
    </reaction>
</comment>
<comment type="catalytic activity">
    <reaction evidence="1">
        <text>N(6)-(1-hydroxy-2-oxoethyl)-L-lysyl-[protein] + H2O = glycolate + L-lysyl-[protein] + H(+)</text>
        <dbReference type="Rhea" id="RHEA:57192"/>
        <dbReference type="Rhea" id="RHEA-COMP:9752"/>
        <dbReference type="Rhea" id="RHEA-COMP:14845"/>
        <dbReference type="ChEBI" id="CHEBI:15377"/>
        <dbReference type="ChEBI" id="CHEBI:15378"/>
        <dbReference type="ChEBI" id="CHEBI:29805"/>
        <dbReference type="ChEBI" id="CHEBI:29969"/>
        <dbReference type="ChEBI" id="CHEBI:141554"/>
        <dbReference type="EC" id="3.5.1.124"/>
    </reaction>
</comment>
<comment type="catalytic activity">
    <reaction evidence="1">
        <text>S-(1-hydroxy-2-oxoethyl)-L-cysteinyl-[protein] + H2O = glycolate + L-cysteinyl-[protein] + H(+)</text>
        <dbReference type="Rhea" id="RHEA:57196"/>
        <dbReference type="Rhea" id="RHEA-COMP:10131"/>
        <dbReference type="Rhea" id="RHEA-COMP:14846"/>
        <dbReference type="ChEBI" id="CHEBI:15377"/>
        <dbReference type="ChEBI" id="CHEBI:15378"/>
        <dbReference type="ChEBI" id="CHEBI:29805"/>
        <dbReference type="ChEBI" id="CHEBI:29950"/>
        <dbReference type="ChEBI" id="CHEBI:141555"/>
        <dbReference type="EC" id="3.5.1.124"/>
    </reaction>
</comment>
<comment type="catalytic activity">
    <reaction evidence="1">
        <text>N(2)-(1-hydroxy-2-oxopropyl)-dGTP + H2O = lactate + dGTP + H(+)</text>
        <dbReference type="Rhea" id="RHEA:57244"/>
        <dbReference type="ChEBI" id="CHEBI:15377"/>
        <dbReference type="ChEBI" id="CHEBI:15378"/>
        <dbReference type="ChEBI" id="CHEBI:24996"/>
        <dbReference type="ChEBI" id="CHEBI:61429"/>
        <dbReference type="ChEBI" id="CHEBI:141569"/>
    </reaction>
</comment>
<comment type="catalytic activity">
    <reaction evidence="1">
        <text>N(2)-(1-hydroxy-2-oxopropyl)-GTP + H2O = lactate + GTP + H(+)</text>
        <dbReference type="Rhea" id="RHEA:57256"/>
        <dbReference type="ChEBI" id="CHEBI:15377"/>
        <dbReference type="ChEBI" id="CHEBI:15378"/>
        <dbReference type="ChEBI" id="CHEBI:24996"/>
        <dbReference type="ChEBI" id="CHEBI:37565"/>
        <dbReference type="ChEBI" id="CHEBI:141570"/>
    </reaction>
</comment>
<comment type="catalytic activity">
    <reaction evidence="1">
        <text>N(2)-(1-hydroxy-2-oxopropyl)-GDP + H2O = lactate + GDP + H(+)</text>
        <dbReference type="Rhea" id="RHEA:57260"/>
        <dbReference type="ChEBI" id="CHEBI:15377"/>
        <dbReference type="ChEBI" id="CHEBI:15378"/>
        <dbReference type="ChEBI" id="CHEBI:24996"/>
        <dbReference type="ChEBI" id="CHEBI:58189"/>
        <dbReference type="ChEBI" id="CHEBI:141573"/>
    </reaction>
</comment>
<comment type="catalytic activity">
    <reaction evidence="1">
        <text>N(2)-(1-hydroxy-2-oxopropyl)-GMP + H2O = lactate + GMP + H(+)</text>
        <dbReference type="Rhea" id="RHEA:57268"/>
        <dbReference type="ChEBI" id="CHEBI:15377"/>
        <dbReference type="ChEBI" id="CHEBI:15378"/>
        <dbReference type="ChEBI" id="CHEBI:24996"/>
        <dbReference type="ChEBI" id="CHEBI:58115"/>
        <dbReference type="ChEBI" id="CHEBI:141575"/>
    </reaction>
</comment>
<comment type="catalytic activity">
    <reaction evidence="1">
        <text>N(2)-(1-hydroxy-2-oxoethyl)-dGTP + H2O = dGTP + glycolate + H(+)</text>
        <dbReference type="Rhea" id="RHEA:57248"/>
        <dbReference type="ChEBI" id="CHEBI:15377"/>
        <dbReference type="ChEBI" id="CHEBI:15378"/>
        <dbReference type="ChEBI" id="CHEBI:29805"/>
        <dbReference type="ChEBI" id="CHEBI:61429"/>
        <dbReference type="ChEBI" id="CHEBI:141572"/>
    </reaction>
</comment>
<comment type="catalytic activity">
    <reaction evidence="1">
        <text>N(2)-(1-hydroxy-2-oxoethyl)-GTP + H2O = glycolate + GTP + H(+)</text>
        <dbReference type="Rhea" id="RHEA:57252"/>
        <dbReference type="ChEBI" id="CHEBI:15377"/>
        <dbReference type="ChEBI" id="CHEBI:15378"/>
        <dbReference type="ChEBI" id="CHEBI:29805"/>
        <dbReference type="ChEBI" id="CHEBI:37565"/>
        <dbReference type="ChEBI" id="CHEBI:141571"/>
    </reaction>
</comment>
<comment type="catalytic activity">
    <reaction evidence="1">
        <text>N(2)-(1-hydroxy-2-oxoethyl)-GDP + H2O = glycolate + GDP + H(+)</text>
        <dbReference type="Rhea" id="RHEA:57264"/>
        <dbReference type="ChEBI" id="CHEBI:15377"/>
        <dbReference type="ChEBI" id="CHEBI:15378"/>
        <dbReference type="ChEBI" id="CHEBI:29805"/>
        <dbReference type="ChEBI" id="CHEBI:58189"/>
        <dbReference type="ChEBI" id="CHEBI:141574"/>
    </reaction>
</comment>
<comment type="catalytic activity">
    <reaction evidence="1">
        <text>N(2)-(1-hydroxy-2-oxoethyl)-GMP + H2O = glycolate + GMP + H(+)</text>
        <dbReference type="Rhea" id="RHEA:57304"/>
        <dbReference type="ChEBI" id="CHEBI:15377"/>
        <dbReference type="ChEBI" id="CHEBI:15378"/>
        <dbReference type="ChEBI" id="CHEBI:29805"/>
        <dbReference type="ChEBI" id="CHEBI:58115"/>
        <dbReference type="ChEBI" id="CHEBI:141576"/>
    </reaction>
</comment>
<comment type="catalytic activity">
    <reaction evidence="1">
        <text>an N(2)-(1-hydroxy-2-oxopropyl)-guanosine in RNA + H2O = a guanosine in RNA + lactate + H(+)</text>
        <dbReference type="Rhea" id="RHEA:57288"/>
        <dbReference type="Rhea" id="RHEA-COMP:14855"/>
        <dbReference type="Rhea" id="RHEA-COMP:14858"/>
        <dbReference type="ChEBI" id="CHEBI:15377"/>
        <dbReference type="ChEBI" id="CHEBI:15378"/>
        <dbReference type="ChEBI" id="CHEBI:24996"/>
        <dbReference type="ChEBI" id="CHEBI:74269"/>
        <dbReference type="ChEBI" id="CHEBI:141580"/>
    </reaction>
</comment>
<comment type="catalytic activity">
    <reaction evidence="1">
        <text>an N(2)-(1-hydroxy-2-oxopropyl)-2'-deoxyguanosine in DNA + H2O = a 2'-deoxyguanosine in DNA + lactate + H(+)</text>
        <dbReference type="Rhea" id="RHEA:57300"/>
        <dbReference type="Rhea" id="RHEA-COMP:11367"/>
        <dbReference type="Rhea" id="RHEA-COMP:14856"/>
        <dbReference type="ChEBI" id="CHEBI:15377"/>
        <dbReference type="ChEBI" id="CHEBI:15378"/>
        <dbReference type="ChEBI" id="CHEBI:24996"/>
        <dbReference type="ChEBI" id="CHEBI:85445"/>
        <dbReference type="ChEBI" id="CHEBI:141578"/>
    </reaction>
</comment>
<comment type="catalytic activity">
    <reaction evidence="1">
        <text>an N(2)-(1-hydroxy-2-oxoethyl)-guanosine in RNA + H2O = a guanosine in RNA + glycolate + H(+)</text>
        <dbReference type="Rhea" id="RHEA:57292"/>
        <dbReference type="Rhea" id="RHEA-COMP:14855"/>
        <dbReference type="Rhea" id="RHEA-COMP:14859"/>
        <dbReference type="ChEBI" id="CHEBI:15377"/>
        <dbReference type="ChEBI" id="CHEBI:15378"/>
        <dbReference type="ChEBI" id="CHEBI:29805"/>
        <dbReference type="ChEBI" id="CHEBI:74269"/>
        <dbReference type="ChEBI" id="CHEBI:141581"/>
    </reaction>
</comment>
<comment type="catalytic activity">
    <reaction evidence="1">
        <text>an N(2)-(1-hydroxy-2-oxoethyl)-2'-deoxyguanosine in DNA + H2O = a 2'-deoxyguanosine in DNA + glycolate + H(+)</text>
        <dbReference type="Rhea" id="RHEA:57296"/>
        <dbReference type="Rhea" id="RHEA-COMP:11367"/>
        <dbReference type="Rhea" id="RHEA-COMP:14857"/>
        <dbReference type="ChEBI" id="CHEBI:15377"/>
        <dbReference type="ChEBI" id="CHEBI:15378"/>
        <dbReference type="ChEBI" id="CHEBI:29805"/>
        <dbReference type="ChEBI" id="CHEBI:85445"/>
        <dbReference type="ChEBI" id="CHEBI:141579"/>
    </reaction>
</comment>
<comment type="subcellular location">
    <subcellularLocation>
        <location evidence="1">Cytoplasm</location>
    </subcellularLocation>
</comment>
<comment type="similarity">
    <text evidence="1">Belongs to the peptidase C56 family. HchA subfamily.</text>
</comment>
<name>HCHA_STAAS</name>
<gene>
    <name evidence="1" type="primary">hchA</name>
    <name type="ordered locus">SAS0509</name>
</gene>
<keyword id="KW-0963">Cytoplasm</keyword>
<keyword id="KW-0227">DNA damage</keyword>
<keyword id="KW-0234">DNA repair</keyword>
<keyword id="KW-0378">Hydrolase</keyword>
<keyword id="KW-0346">Stress response</keyword>
<evidence type="ECO:0000255" key="1">
    <source>
        <dbReference type="HAMAP-Rule" id="MF_01046"/>
    </source>
</evidence>
<evidence type="ECO:0000256" key="2">
    <source>
        <dbReference type="SAM" id="MobiDB-lite"/>
    </source>
</evidence>
<reference key="1">
    <citation type="journal article" date="2004" name="Proc. Natl. Acad. Sci. U.S.A.">
        <title>Complete genomes of two clinical Staphylococcus aureus strains: evidence for the rapid evolution of virulence and drug resistance.</title>
        <authorList>
            <person name="Holden M.T.G."/>
            <person name="Feil E.J."/>
            <person name="Lindsay J.A."/>
            <person name="Peacock S.J."/>
            <person name="Day N.P.J."/>
            <person name="Enright M.C."/>
            <person name="Foster T.J."/>
            <person name="Moore C.E."/>
            <person name="Hurst L."/>
            <person name="Atkin R."/>
            <person name="Barron A."/>
            <person name="Bason N."/>
            <person name="Bentley S.D."/>
            <person name="Chillingworth C."/>
            <person name="Chillingworth T."/>
            <person name="Churcher C."/>
            <person name="Clark L."/>
            <person name="Corton C."/>
            <person name="Cronin A."/>
            <person name="Doggett J."/>
            <person name="Dowd L."/>
            <person name="Feltwell T."/>
            <person name="Hance Z."/>
            <person name="Harris B."/>
            <person name="Hauser H."/>
            <person name="Holroyd S."/>
            <person name="Jagels K."/>
            <person name="James K.D."/>
            <person name="Lennard N."/>
            <person name="Line A."/>
            <person name="Mayes R."/>
            <person name="Moule S."/>
            <person name="Mungall K."/>
            <person name="Ormond D."/>
            <person name="Quail M.A."/>
            <person name="Rabbinowitsch E."/>
            <person name="Rutherford K.M."/>
            <person name="Sanders M."/>
            <person name="Sharp S."/>
            <person name="Simmonds M."/>
            <person name="Stevens K."/>
            <person name="Whitehead S."/>
            <person name="Barrell B.G."/>
            <person name="Spratt B.G."/>
            <person name="Parkhill J."/>
        </authorList>
    </citation>
    <scope>NUCLEOTIDE SEQUENCE [LARGE SCALE GENOMIC DNA]</scope>
    <source>
        <strain>MSSA476</strain>
    </source>
</reference>